<reference key="1">
    <citation type="journal article" date="1987" name="Nucleic Acids Res.">
        <title>Nucleotide sequence of the transcriptional repressor gene korB which plays a key role in regulation of the copy number of broad host range plasmid RK2.</title>
        <authorList>
            <person name="Theophilus B.D.B."/>
            <person name="Thomas C.M."/>
        </authorList>
    </citation>
    <scope>NUCLEOTIDE SEQUENCE [GENOMIC DNA]</scope>
</reference>
<reference key="2">
    <citation type="journal article" date="1987" name="J. Mol. Biol.">
        <title>Nucleotide sequence of korB, a replication control gene of broad host-range plasmid RK2.</title>
        <authorList>
            <person name="Kornacki J.A."/>
            <person name="Balderes P.J."/>
            <person name="Figurski D.H."/>
        </authorList>
    </citation>
    <scope>NUCLEOTIDE SEQUENCE [GENOMIC DNA]</scope>
</reference>
<reference key="3">
    <citation type="journal article" date="1986" name="Nucleic Acids Res.">
        <title>The trfB region of broad host range plasmid RK2: the nucleotide sequence reveals incC and key regulatory gene trfB/korA/korD as overlapping genes.</title>
        <authorList>
            <person name="Thomas C.M."/>
            <person name="Smith C.A."/>
        </authorList>
    </citation>
    <scope>NUCLEOTIDE SEQUENCE [GENOMIC DNA] OF 1-114</scope>
</reference>
<reference key="4">
    <citation type="journal article" date="1991" name="J. Bacteriol.">
        <title>The korF region of broad-host-range plasmid RK2 encodes two polypeptides with transcriptional repressor activity.</title>
        <authorList>
            <person name="Jagura-Burdzy G."/>
            <person name="Ibbotson J.P."/>
            <person name="Thomas C.M."/>
        </authorList>
    </citation>
    <scope>NUCLEOTIDE SEQUENCE [GENOMIC DNA] OF 327-358</scope>
</reference>
<feature type="chain" id="PRO_0000178699" description="Transcriptional repressor protein KorB">
    <location>
        <begin position="1"/>
        <end position="358"/>
    </location>
</feature>
<feature type="region of interest" description="Disordered" evidence="1">
    <location>
        <begin position="1"/>
        <end position="79"/>
    </location>
</feature>
<feature type="region of interest" description="Disordered" evidence="1">
    <location>
        <begin position="256"/>
        <end position="305"/>
    </location>
</feature>
<feature type="compositionally biased region" description="Low complexity" evidence="1">
    <location>
        <begin position="1"/>
        <end position="42"/>
    </location>
</feature>
<feature type="compositionally biased region" description="Acidic residues" evidence="1">
    <location>
        <begin position="275"/>
        <end position="285"/>
    </location>
</feature>
<feature type="compositionally biased region" description="Basic and acidic residues" evidence="1">
    <location>
        <begin position="286"/>
        <end position="305"/>
    </location>
</feature>
<feature type="strand" evidence="5">
    <location>
        <begin position="54"/>
        <end position="57"/>
    </location>
</feature>
<feature type="helix" evidence="5">
    <location>
        <begin position="58"/>
        <end position="60"/>
    </location>
</feature>
<feature type="helix" evidence="5">
    <location>
        <begin position="74"/>
        <end position="76"/>
    </location>
</feature>
<feature type="helix" evidence="5">
    <location>
        <begin position="78"/>
        <end position="91"/>
    </location>
</feature>
<feature type="strand" evidence="5">
    <location>
        <begin position="97"/>
        <end position="101"/>
    </location>
</feature>
<feature type="strand" evidence="5">
    <location>
        <begin position="103"/>
        <end position="105"/>
    </location>
</feature>
<feature type="strand" evidence="5">
    <location>
        <begin position="109"/>
        <end position="113"/>
    </location>
</feature>
<feature type="helix" evidence="5">
    <location>
        <begin position="115"/>
        <end position="123"/>
    </location>
</feature>
<feature type="strand" evidence="5">
    <location>
        <begin position="127"/>
        <end position="133"/>
    </location>
</feature>
<feature type="helix" evidence="4">
    <location>
        <begin position="141"/>
        <end position="148"/>
    </location>
</feature>
<feature type="helix" evidence="4">
    <location>
        <begin position="154"/>
        <end position="166"/>
    </location>
</feature>
<feature type="helix" evidence="4">
    <location>
        <begin position="171"/>
        <end position="178"/>
    </location>
</feature>
<feature type="helix" evidence="4">
    <location>
        <begin position="182"/>
        <end position="189"/>
    </location>
</feature>
<feature type="helix" evidence="4">
    <location>
        <begin position="190"/>
        <end position="192"/>
    </location>
</feature>
<feature type="helix" evidence="4">
    <location>
        <begin position="196"/>
        <end position="203"/>
    </location>
</feature>
<feature type="helix" evidence="4">
    <location>
        <begin position="210"/>
        <end position="222"/>
    </location>
</feature>
<feature type="helix" evidence="4">
    <location>
        <begin position="224"/>
        <end position="232"/>
    </location>
</feature>
<feature type="helix" evidence="4">
    <location>
        <begin position="240"/>
        <end position="251"/>
    </location>
</feature>
<feature type="strand" evidence="3">
    <location>
        <begin position="308"/>
        <end position="313"/>
    </location>
</feature>
<feature type="strand" evidence="3">
    <location>
        <begin position="316"/>
        <end position="320"/>
    </location>
</feature>
<feature type="strand" evidence="3">
    <location>
        <begin position="331"/>
        <end position="336"/>
    </location>
</feature>
<feature type="turn" evidence="3">
    <location>
        <begin position="337"/>
        <end position="339"/>
    </location>
</feature>
<feature type="strand" evidence="3">
    <location>
        <begin position="342"/>
        <end position="346"/>
    </location>
</feature>
<feature type="helix" evidence="3">
    <location>
        <begin position="347"/>
        <end position="349"/>
    </location>
</feature>
<feature type="strand" evidence="3">
    <location>
        <begin position="351"/>
        <end position="356"/>
    </location>
</feature>
<comment type="function">
    <text>In conjunction with KorA, inhibits the transcription of the kilA, trfA and korAB operons. Is also involved in the negative control of the kilB operon.</text>
</comment>
<comment type="interaction">
    <interactant intactId="EBI-6405482">
        <id>P07674</id>
    </interactant>
    <interactant intactId="EBI-6405477">
        <id>P03052</id>
        <label>trfB</label>
    </interactant>
    <organismsDiffer>false</organismsDiffer>
    <experiments>2</experiments>
</comment>
<comment type="similarity">
    <text evidence="2">Belongs to the ParB family.</text>
</comment>
<dbReference type="EMBL" id="Y00448">
    <property type="protein sequence ID" value="CAA68503.1"/>
    <property type="molecule type" value="Genomic_DNA"/>
</dbReference>
<dbReference type="EMBL" id="X03962">
    <property type="protein sequence ID" value="CAA27598.1"/>
    <property type="molecule type" value="Genomic_DNA"/>
</dbReference>
<dbReference type="EMBL" id="X06543">
    <property type="protein sequence ID" value="CAA29790.1"/>
    <property type="molecule type" value="Genomic_DNA"/>
</dbReference>
<dbReference type="PIR" id="A26837">
    <property type="entry name" value="RPECKB"/>
</dbReference>
<dbReference type="RefSeq" id="WP_011205828.1">
    <property type="nucleotide sequence ID" value="NZ_VMTS01000048.1"/>
</dbReference>
<dbReference type="PDB" id="1IGQ">
    <property type="method" value="X-ray"/>
    <property type="resolution" value="1.70 A"/>
    <property type="chains" value="A/B/C/D=297-358"/>
</dbReference>
<dbReference type="PDB" id="1IGU">
    <property type="method" value="X-ray"/>
    <property type="resolution" value="2.20 A"/>
    <property type="chains" value="A/B=297-358"/>
</dbReference>
<dbReference type="PDB" id="1R71">
    <property type="method" value="X-ray"/>
    <property type="resolution" value="2.20 A"/>
    <property type="chains" value="A/B/C/D=117-294"/>
</dbReference>
<dbReference type="PDB" id="8QA8">
    <property type="method" value="X-ray"/>
    <property type="resolution" value="2.30 A"/>
    <property type="chains" value="A/B/C/D/E/F=31-253"/>
</dbReference>
<dbReference type="PDB" id="8QA9">
    <property type="method" value="X-ray"/>
    <property type="resolution" value="2.70 A"/>
    <property type="chains" value="A/B=31-253"/>
</dbReference>
<dbReference type="PDBsum" id="1IGQ"/>
<dbReference type="PDBsum" id="1IGU"/>
<dbReference type="PDBsum" id="1R71"/>
<dbReference type="PDBsum" id="8QA8"/>
<dbReference type="PDBsum" id="8QA9"/>
<dbReference type="SMR" id="P07674"/>
<dbReference type="DIP" id="DIP-17007N"/>
<dbReference type="IntAct" id="P07674">
    <property type="interactions" value="1"/>
</dbReference>
<dbReference type="EvolutionaryTrace" id="P07674"/>
<dbReference type="GO" id="GO:0005694">
    <property type="term" value="C:chromosome"/>
    <property type="evidence" value="ECO:0007669"/>
    <property type="project" value="TreeGrafter"/>
</dbReference>
<dbReference type="GO" id="GO:0032991">
    <property type="term" value="C:protein-containing complex"/>
    <property type="evidence" value="ECO:0000315"/>
    <property type="project" value="CAFA"/>
</dbReference>
<dbReference type="GO" id="GO:0003677">
    <property type="term" value="F:DNA binding"/>
    <property type="evidence" value="ECO:0007669"/>
    <property type="project" value="UniProtKB-KW"/>
</dbReference>
<dbReference type="GO" id="GO:0042802">
    <property type="term" value="F:identical protein binding"/>
    <property type="evidence" value="ECO:0000315"/>
    <property type="project" value="CAFA"/>
</dbReference>
<dbReference type="GO" id="GO:0007059">
    <property type="term" value="P:chromosome segregation"/>
    <property type="evidence" value="ECO:0007669"/>
    <property type="project" value="TreeGrafter"/>
</dbReference>
<dbReference type="GO" id="GO:0045892">
    <property type="term" value="P:negative regulation of DNA-templated transcription"/>
    <property type="evidence" value="ECO:0007669"/>
    <property type="project" value="InterPro"/>
</dbReference>
<dbReference type="CDD" id="cd16398">
    <property type="entry name" value="KorB_N_like"/>
    <property type="match status" value="1"/>
</dbReference>
<dbReference type="DisProt" id="DP00656"/>
<dbReference type="FunFam" id="1.10.10.730:FF:000001">
    <property type="entry name" value="Transcriptional repressor protein KorB"/>
    <property type="match status" value="1"/>
</dbReference>
<dbReference type="FunFam" id="2.30.30.150:FF:000001">
    <property type="entry name" value="Transcriptional repressor protein KorB"/>
    <property type="match status" value="1"/>
</dbReference>
<dbReference type="Gene3D" id="3.90.1530.30">
    <property type="match status" value="1"/>
</dbReference>
<dbReference type="Gene3D" id="6.10.250.140">
    <property type="match status" value="1"/>
</dbReference>
<dbReference type="Gene3D" id="1.10.10.730">
    <property type="entry name" value="KorB DNA-binding domain"/>
    <property type="match status" value="1"/>
</dbReference>
<dbReference type="Gene3D" id="2.30.30.150">
    <property type="entry name" value="KorB, C-terminal domain"/>
    <property type="match status" value="1"/>
</dbReference>
<dbReference type="InterPro" id="IPR050336">
    <property type="entry name" value="Chromosome_partition/occlusion"/>
</dbReference>
<dbReference type="InterPro" id="IPR010575">
    <property type="entry name" value="KorB_C"/>
</dbReference>
<dbReference type="InterPro" id="IPR037048">
    <property type="entry name" value="KorB_C_sf"/>
</dbReference>
<dbReference type="InterPro" id="IPR042075">
    <property type="entry name" value="KorB_DNA-db"/>
</dbReference>
<dbReference type="InterPro" id="IPR013741">
    <property type="entry name" value="KorB_domain"/>
</dbReference>
<dbReference type="InterPro" id="IPR004437">
    <property type="entry name" value="ParB/RepB/Spo0J"/>
</dbReference>
<dbReference type="InterPro" id="IPR003115">
    <property type="entry name" value="ParB/Sulfiredoxin_dom"/>
</dbReference>
<dbReference type="InterPro" id="IPR036086">
    <property type="entry name" value="ParB/Sulfiredoxin_sf"/>
</dbReference>
<dbReference type="InterPro" id="IPR008988">
    <property type="entry name" value="Transcriptional_repressor_C"/>
</dbReference>
<dbReference type="NCBIfam" id="TIGR00180">
    <property type="entry name" value="parB_part"/>
    <property type="match status" value="1"/>
</dbReference>
<dbReference type="PANTHER" id="PTHR33375">
    <property type="entry name" value="CHROMOSOME-PARTITIONING PROTEIN PARB-RELATED"/>
    <property type="match status" value="1"/>
</dbReference>
<dbReference type="PANTHER" id="PTHR33375:SF1">
    <property type="entry name" value="CHROMOSOME-PARTITIONING PROTEIN PARB-RELATED"/>
    <property type="match status" value="1"/>
</dbReference>
<dbReference type="Pfam" id="PF08535">
    <property type="entry name" value="KorB"/>
    <property type="match status" value="1"/>
</dbReference>
<dbReference type="Pfam" id="PF06613">
    <property type="entry name" value="KorB_C"/>
    <property type="match status" value="1"/>
</dbReference>
<dbReference type="Pfam" id="PF02195">
    <property type="entry name" value="ParBc"/>
    <property type="match status" value="1"/>
</dbReference>
<dbReference type="SMART" id="SM00470">
    <property type="entry name" value="ParB"/>
    <property type="match status" value="1"/>
</dbReference>
<dbReference type="SUPFAM" id="SSF50037">
    <property type="entry name" value="C-terminal domain of transcriptional repressors"/>
    <property type="match status" value="1"/>
</dbReference>
<dbReference type="SUPFAM" id="SSF109709">
    <property type="entry name" value="KorB DNA-binding domain-like"/>
    <property type="match status" value="1"/>
</dbReference>
<dbReference type="SUPFAM" id="SSF110849">
    <property type="entry name" value="ParB/Sulfiredoxin"/>
    <property type="match status" value="1"/>
</dbReference>
<organism>
    <name type="scientific">Escherichia coli</name>
    <dbReference type="NCBI Taxonomy" id="562"/>
    <lineage>
        <taxon>Bacteria</taxon>
        <taxon>Pseudomonadati</taxon>
        <taxon>Pseudomonadota</taxon>
        <taxon>Gammaproteobacteria</taxon>
        <taxon>Enterobacterales</taxon>
        <taxon>Enterobacteriaceae</taxon>
        <taxon>Escherichia</taxon>
    </lineage>
</organism>
<evidence type="ECO:0000256" key="1">
    <source>
        <dbReference type="SAM" id="MobiDB-lite"/>
    </source>
</evidence>
<evidence type="ECO:0000305" key="2"/>
<evidence type="ECO:0007829" key="3">
    <source>
        <dbReference type="PDB" id="1IGQ"/>
    </source>
</evidence>
<evidence type="ECO:0007829" key="4">
    <source>
        <dbReference type="PDB" id="1R71"/>
    </source>
</evidence>
<evidence type="ECO:0007829" key="5">
    <source>
        <dbReference type="PDB" id="8QA8"/>
    </source>
</evidence>
<gene>
    <name type="primary">korB</name>
</gene>
<proteinExistence type="evidence at protein level"/>
<accession>P07674</accession>
<protein>
    <recommendedName>
        <fullName>Transcriptional repressor protein KorB</fullName>
    </recommendedName>
</protein>
<sequence length="358" mass="39011">MTAAQAKTTKKNTAAAAQEAAGAAQPSGLGLDSIGDLSSLLDAPAASQGGSGPIELDLDLIDEDPHQPRTADNPGFSPESIAEIGATIKERGVKSPISVRENQEQPGRYIINHGARRYRGSKWAGKKSIPAFIDNDYNEADQVIENLQRNELTPREIADFIGRELAKGKKKGDIAKEIGKSPAFITQHVTLLDLPEKIADAFNTGRVRDVTVVNELVTAFKKRPEEVEAWLDDDTQEITRGTVKLLREFLDEKGRDPNTVDAFNGQTDAERDAEAGDGQDGEDGDQDGKDAKEKGAKEPDPDKLKKAIVQVEHDERPARLILNRRPPAEGYAWLKYEDDGQEFEANLADVKLVALIEG</sequence>
<geneLocation type="plasmid">
    <name>IncP-alpha RK2</name>
</geneLocation>
<keyword id="KW-0002">3D-structure</keyword>
<keyword id="KW-0238">DNA-binding</keyword>
<keyword id="KW-0614">Plasmid</keyword>
<keyword id="KW-0678">Repressor</keyword>
<keyword id="KW-0804">Transcription</keyword>
<keyword id="KW-0805">Transcription regulation</keyword>
<name>KORB2_ECOLX</name>